<name>PIMT_SHISS</name>
<accession>Q3YYB9</accession>
<gene>
    <name evidence="1" type="primary">pcm</name>
    <name type="ordered locus">SSON_2891</name>
</gene>
<reference key="1">
    <citation type="journal article" date="2005" name="Nucleic Acids Res.">
        <title>Genome dynamics and diversity of Shigella species, the etiologic agents of bacillary dysentery.</title>
        <authorList>
            <person name="Yang F."/>
            <person name="Yang J."/>
            <person name="Zhang X."/>
            <person name="Chen L."/>
            <person name="Jiang Y."/>
            <person name="Yan Y."/>
            <person name="Tang X."/>
            <person name="Wang J."/>
            <person name="Xiong Z."/>
            <person name="Dong J."/>
            <person name="Xue Y."/>
            <person name="Zhu Y."/>
            <person name="Xu X."/>
            <person name="Sun L."/>
            <person name="Chen S."/>
            <person name="Nie H."/>
            <person name="Peng J."/>
            <person name="Xu J."/>
            <person name="Wang Y."/>
            <person name="Yuan Z."/>
            <person name="Wen Y."/>
            <person name="Yao Z."/>
            <person name="Shen Y."/>
            <person name="Qiang B."/>
            <person name="Hou Y."/>
            <person name="Yu J."/>
            <person name="Jin Q."/>
        </authorList>
    </citation>
    <scope>NUCLEOTIDE SEQUENCE [LARGE SCALE GENOMIC DNA]</scope>
    <source>
        <strain>Ss046</strain>
    </source>
</reference>
<proteinExistence type="inferred from homology"/>
<evidence type="ECO:0000255" key="1">
    <source>
        <dbReference type="HAMAP-Rule" id="MF_00090"/>
    </source>
</evidence>
<organism>
    <name type="scientific">Shigella sonnei (strain Ss046)</name>
    <dbReference type="NCBI Taxonomy" id="300269"/>
    <lineage>
        <taxon>Bacteria</taxon>
        <taxon>Pseudomonadati</taxon>
        <taxon>Pseudomonadota</taxon>
        <taxon>Gammaproteobacteria</taxon>
        <taxon>Enterobacterales</taxon>
        <taxon>Enterobacteriaceae</taxon>
        <taxon>Shigella</taxon>
    </lineage>
</organism>
<sequence length="208" mass="23272">MVSRRVQALLEQLRAQGIQDEQVLNALAAVPREKFVDEAFEQKAWDNIALPIGQGQTISQPYMVARMTELLELTPQSRVLEIGTGSGYQTAILAHLVQHVCSVERIKGLQWQARRRLKNLDLHNVSTRHGDGWQGWQARAPFDAIIVTAAPPEIPTALMTQLDEGGILVLPVGEEHQYLKRVRRRGGEFIIDTVEAVRFVPLVKGELA</sequence>
<protein>
    <recommendedName>
        <fullName evidence="1">Protein-L-isoaspartate O-methyltransferase</fullName>
        <ecNumber evidence="1">2.1.1.77</ecNumber>
    </recommendedName>
    <alternativeName>
        <fullName evidence="1">L-isoaspartyl protein carboxyl methyltransferase</fullName>
    </alternativeName>
    <alternativeName>
        <fullName evidence="1">Protein L-isoaspartyl methyltransferase</fullName>
    </alternativeName>
    <alternativeName>
        <fullName evidence="1">Protein-beta-aspartate methyltransferase</fullName>
        <shortName evidence="1">PIMT</shortName>
    </alternativeName>
</protein>
<feature type="chain" id="PRO_1000004828" description="Protein-L-isoaspartate O-methyltransferase">
    <location>
        <begin position="1"/>
        <end position="208"/>
    </location>
</feature>
<feature type="active site" evidence="1">
    <location>
        <position position="59"/>
    </location>
</feature>
<comment type="function">
    <text evidence="1">Catalyzes the methyl esterification of L-isoaspartyl residues in peptides and proteins that result from spontaneous decomposition of normal L-aspartyl and L-asparaginyl residues. It plays a role in the repair and/or degradation of damaged proteins.</text>
</comment>
<comment type="catalytic activity">
    <reaction evidence="1">
        <text>[protein]-L-isoaspartate + S-adenosyl-L-methionine = [protein]-L-isoaspartate alpha-methyl ester + S-adenosyl-L-homocysteine</text>
        <dbReference type="Rhea" id="RHEA:12705"/>
        <dbReference type="Rhea" id="RHEA-COMP:12143"/>
        <dbReference type="Rhea" id="RHEA-COMP:12144"/>
        <dbReference type="ChEBI" id="CHEBI:57856"/>
        <dbReference type="ChEBI" id="CHEBI:59789"/>
        <dbReference type="ChEBI" id="CHEBI:90596"/>
        <dbReference type="ChEBI" id="CHEBI:90598"/>
        <dbReference type="EC" id="2.1.1.77"/>
    </reaction>
</comment>
<comment type="subcellular location">
    <subcellularLocation>
        <location evidence="1">Cytoplasm</location>
    </subcellularLocation>
</comment>
<comment type="similarity">
    <text evidence="1">Belongs to the methyltransferase superfamily. L-isoaspartyl/D-aspartyl protein methyltransferase family.</text>
</comment>
<keyword id="KW-0963">Cytoplasm</keyword>
<keyword id="KW-0489">Methyltransferase</keyword>
<keyword id="KW-1185">Reference proteome</keyword>
<keyword id="KW-0949">S-adenosyl-L-methionine</keyword>
<keyword id="KW-0808">Transferase</keyword>
<dbReference type="EC" id="2.1.1.77" evidence="1"/>
<dbReference type="EMBL" id="CP000038">
    <property type="protein sequence ID" value="AAZ89493.1"/>
    <property type="molecule type" value="Genomic_DNA"/>
</dbReference>
<dbReference type="RefSeq" id="WP_000254714.1">
    <property type="nucleotide sequence ID" value="NC_007384.1"/>
</dbReference>
<dbReference type="SMR" id="Q3YYB9"/>
<dbReference type="KEGG" id="ssn:SSON_2891"/>
<dbReference type="HOGENOM" id="CLU_055432_2_0_6"/>
<dbReference type="Proteomes" id="UP000002529">
    <property type="component" value="Chromosome"/>
</dbReference>
<dbReference type="GO" id="GO:0005737">
    <property type="term" value="C:cytoplasm"/>
    <property type="evidence" value="ECO:0007669"/>
    <property type="project" value="UniProtKB-SubCell"/>
</dbReference>
<dbReference type="GO" id="GO:0004719">
    <property type="term" value="F:protein-L-isoaspartate (D-aspartate) O-methyltransferase activity"/>
    <property type="evidence" value="ECO:0007669"/>
    <property type="project" value="UniProtKB-UniRule"/>
</dbReference>
<dbReference type="GO" id="GO:0032259">
    <property type="term" value="P:methylation"/>
    <property type="evidence" value="ECO:0007669"/>
    <property type="project" value="UniProtKB-KW"/>
</dbReference>
<dbReference type="GO" id="GO:0036211">
    <property type="term" value="P:protein modification process"/>
    <property type="evidence" value="ECO:0007669"/>
    <property type="project" value="UniProtKB-UniRule"/>
</dbReference>
<dbReference type="GO" id="GO:0030091">
    <property type="term" value="P:protein repair"/>
    <property type="evidence" value="ECO:0007669"/>
    <property type="project" value="UniProtKB-UniRule"/>
</dbReference>
<dbReference type="CDD" id="cd02440">
    <property type="entry name" value="AdoMet_MTases"/>
    <property type="match status" value="1"/>
</dbReference>
<dbReference type="FunFam" id="3.40.50.150:FF:000010">
    <property type="entry name" value="Protein-L-isoaspartate O-methyltransferase"/>
    <property type="match status" value="1"/>
</dbReference>
<dbReference type="Gene3D" id="3.40.50.150">
    <property type="entry name" value="Vaccinia Virus protein VP39"/>
    <property type="match status" value="1"/>
</dbReference>
<dbReference type="HAMAP" id="MF_00090">
    <property type="entry name" value="PIMT"/>
    <property type="match status" value="1"/>
</dbReference>
<dbReference type="InterPro" id="IPR000682">
    <property type="entry name" value="PCMT"/>
</dbReference>
<dbReference type="InterPro" id="IPR029063">
    <property type="entry name" value="SAM-dependent_MTases_sf"/>
</dbReference>
<dbReference type="NCBIfam" id="TIGR00080">
    <property type="entry name" value="pimt"/>
    <property type="match status" value="1"/>
</dbReference>
<dbReference type="NCBIfam" id="NF001453">
    <property type="entry name" value="PRK00312.1"/>
    <property type="match status" value="1"/>
</dbReference>
<dbReference type="PANTHER" id="PTHR11579">
    <property type="entry name" value="PROTEIN-L-ISOASPARTATE O-METHYLTRANSFERASE"/>
    <property type="match status" value="1"/>
</dbReference>
<dbReference type="PANTHER" id="PTHR11579:SF0">
    <property type="entry name" value="PROTEIN-L-ISOASPARTATE(D-ASPARTATE) O-METHYLTRANSFERASE"/>
    <property type="match status" value="1"/>
</dbReference>
<dbReference type="Pfam" id="PF01135">
    <property type="entry name" value="PCMT"/>
    <property type="match status" value="1"/>
</dbReference>
<dbReference type="SUPFAM" id="SSF53335">
    <property type="entry name" value="S-adenosyl-L-methionine-dependent methyltransferases"/>
    <property type="match status" value="1"/>
</dbReference>
<dbReference type="PROSITE" id="PS01279">
    <property type="entry name" value="PCMT"/>
    <property type="match status" value="1"/>
</dbReference>